<feature type="chain" id="PRO_0000268543" description="Bifunctional protein FolD">
    <location>
        <begin position="1"/>
        <end position="283"/>
    </location>
</feature>
<feature type="binding site" evidence="1">
    <location>
        <begin position="165"/>
        <end position="167"/>
    </location>
    <ligand>
        <name>NADP(+)</name>
        <dbReference type="ChEBI" id="CHEBI:58349"/>
    </ligand>
</feature>
<feature type="binding site" evidence="1">
    <location>
        <position position="192"/>
    </location>
    <ligand>
        <name>NADP(+)</name>
        <dbReference type="ChEBI" id="CHEBI:58349"/>
    </ligand>
</feature>
<feature type="binding site" evidence="1">
    <location>
        <position position="233"/>
    </location>
    <ligand>
        <name>NADP(+)</name>
        <dbReference type="ChEBI" id="CHEBI:58349"/>
    </ligand>
</feature>
<comment type="function">
    <text evidence="1">Catalyzes the oxidation of 5,10-methylenetetrahydrofolate to 5,10-methenyltetrahydrofolate and then the hydrolysis of 5,10-methenyltetrahydrofolate to 10-formyltetrahydrofolate.</text>
</comment>
<comment type="catalytic activity">
    <reaction evidence="1">
        <text>(6R)-5,10-methylene-5,6,7,8-tetrahydrofolate + NADP(+) = (6R)-5,10-methenyltetrahydrofolate + NADPH</text>
        <dbReference type="Rhea" id="RHEA:22812"/>
        <dbReference type="ChEBI" id="CHEBI:15636"/>
        <dbReference type="ChEBI" id="CHEBI:57455"/>
        <dbReference type="ChEBI" id="CHEBI:57783"/>
        <dbReference type="ChEBI" id="CHEBI:58349"/>
        <dbReference type="EC" id="1.5.1.5"/>
    </reaction>
</comment>
<comment type="catalytic activity">
    <reaction evidence="1">
        <text>(6R)-5,10-methenyltetrahydrofolate + H2O = (6R)-10-formyltetrahydrofolate + H(+)</text>
        <dbReference type="Rhea" id="RHEA:23700"/>
        <dbReference type="ChEBI" id="CHEBI:15377"/>
        <dbReference type="ChEBI" id="CHEBI:15378"/>
        <dbReference type="ChEBI" id="CHEBI:57455"/>
        <dbReference type="ChEBI" id="CHEBI:195366"/>
        <dbReference type="EC" id="3.5.4.9"/>
    </reaction>
</comment>
<comment type="pathway">
    <text evidence="1">One-carbon metabolism; tetrahydrofolate interconversion.</text>
</comment>
<comment type="subunit">
    <text evidence="1">Homodimer.</text>
</comment>
<comment type="similarity">
    <text evidence="1">Belongs to the tetrahydrofolate dehydrogenase/cyclohydrolase family.</text>
</comment>
<keyword id="KW-0028">Amino-acid biosynthesis</keyword>
<keyword id="KW-0368">Histidine biosynthesis</keyword>
<keyword id="KW-0378">Hydrolase</keyword>
<keyword id="KW-0486">Methionine biosynthesis</keyword>
<keyword id="KW-0511">Multifunctional enzyme</keyword>
<keyword id="KW-0521">NADP</keyword>
<keyword id="KW-0554">One-carbon metabolism</keyword>
<keyword id="KW-0560">Oxidoreductase</keyword>
<keyword id="KW-0658">Purine biosynthesis</keyword>
<name>FOLD_THEFY</name>
<reference key="1">
    <citation type="journal article" date="2007" name="J. Bacteriol.">
        <title>Genome sequence and analysis of the soil cellulolytic actinomycete Thermobifida fusca YX.</title>
        <authorList>
            <person name="Lykidis A."/>
            <person name="Mavromatis K."/>
            <person name="Ivanova N."/>
            <person name="Anderson I."/>
            <person name="Land M."/>
            <person name="DiBartolo G."/>
            <person name="Martinez M."/>
            <person name="Lapidus A."/>
            <person name="Lucas S."/>
            <person name="Copeland A."/>
            <person name="Richardson P."/>
            <person name="Wilson D.B."/>
            <person name="Kyrpides N."/>
        </authorList>
    </citation>
    <scope>NUCLEOTIDE SEQUENCE [LARGE SCALE GENOMIC DNA]</scope>
    <source>
        <strain>YX</strain>
    </source>
</reference>
<protein>
    <recommendedName>
        <fullName evidence="1">Bifunctional protein FolD</fullName>
    </recommendedName>
    <domain>
        <recommendedName>
            <fullName evidence="1">Methylenetetrahydrofolate dehydrogenase</fullName>
            <ecNumber evidence="1">1.5.1.5</ecNumber>
        </recommendedName>
    </domain>
    <domain>
        <recommendedName>
            <fullName evidence="1">Methenyltetrahydrofolate cyclohydrolase</fullName>
            <ecNumber evidence="1">3.5.4.9</ecNumber>
        </recommendedName>
    </domain>
</protein>
<proteinExistence type="inferred from homology"/>
<dbReference type="EC" id="1.5.1.5" evidence="1"/>
<dbReference type="EC" id="3.5.4.9" evidence="1"/>
<dbReference type="EMBL" id="CP000088">
    <property type="protein sequence ID" value="AAZ56604.1"/>
    <property type="molecule type" value="Genomic_DNA"/>
</dbReference>
<dbReference type="RefSeq" id="WP_011292994.1">
    <property type="nucleotide sequence ID" value="NC_007333.1"/>
</dbReference>
<dbReference type="SMR" id="Q47LR8"/>
<dbReference type="STRING" id="269800.Tfu_2571"/>
<dbReference type="KEGG" id="tfu:Tfu_2571"/>
<dbReference type="eggNOG" id="COG0190">
    <property type="taxonomic scope" value="Bacteria"/>
</dbReference>
<dbReference type="HOGENOM" id="CLU_034045_3_0_11"/>
<dbReference type="OrthoDB" id="9803580at2"/>
<dbReference type="UniPathway" id="UPA00193"/>
<dbReference type="GO" id="GO:0005829">
    <property type="term" value="C:cytosol"/>
    <property type="evidence" value="ECO:0007669"/>
    <property type="project" value="TreeGrafter"/>
</dbReference>
<dbReference type="GO" id="GO:0004477">
    <property type="term" value="F:methenyltetrahydrofolate cyclohydrolase activity"/>
    <property type="evidence" value="ECO:0007669"/>
    <property type="project" value="UniProtKB-UniRule"/>
</dbReference>
<dbReference type="GO" id="GO:0004488">
    <property type="term" value="F:methylenetetrahydrofolate dehydrogenase (NADP+) activity"/>
    <property type="evidence" value="ECO:0007669"/>
    <property type="project" value="UniProtKB-UniRule"/>
</dbReference>
<dbReference type="GO" id="GO:0000105">
    <property type="term" value="P:L-histidine biosynthetic process"/>
    <property type="evidence" value="ECO:0007669"/>
    <property type="project" value="UniProtKB-KW"/>
</dbReference>
<dbReference type="GO" id="GO:0009086">
    <property type="term" value="P:methionine biosynthetic process"/>
    <property type="evidence" value="ECO:0007669"/>
    <property type="project" value="UniProtKB-KW"/>
</dbReference>
<dbReference type="GO" id="GO:0006164">
    <property type="term" value="P:purine nucleotide biosynthetic process"/>
    <property type="evidence" value="ECO:0007669"/>
    <property type="project" value="UniProtKB-KW"/>
</dbReference>
<dbReference type="GO" id="GO:0035999">
    <property type="term" value="P:tetrahydrofolate interconversion"/>
    <property type="evidence" value="ECO:0007669"/>
    <property type="project" value="UniProtKB-UniRule"/>
</dbReference>
<dbReference type="CDD" id="cd01080">
    <property type="entry name" value="NAD_bind_m-THF_DH_Cyclohyd"/>
    <property type="match status" value="1"/>
</dbReference>
<dbReference type="FunFam" id="3.40.50.720:FF:000094">
    <property type="entry name" value="Bifunctional protein FolD"/>
    <property type="match status" value="1"/>
</dbReference>
<dbReference type="FunFam" id="3.40.50.10860:FF:000005">
    <property type="entry name" value="C-1-tetrahydrofolate synthase, cytoplasmic, putative"/>
    <property type="match status" value="1"/>
</dbReference>
<dbReference type="Gene3D" id="3.40.50.10860">
    <property type="entry name" value="Leucine Dehydrogenase, chain A, domain 1"/>
    <property type="match status" value="1"/>
</dbReference>
<dbReference type="Gene3D" id="3.40.50.720">
    <property type="entry name" value="NAD(P)-binding Rossmann-like Domain"/>
    <property type="match status" value="1"/>
</dbReference>
<dbReference type="HAMAP" id="MF_01576">
    <property type="entry name" value="THF_DHG_CYH"/>
    <property type="match status" value="1"/>
</dbReference>
<dbReference type="InterPro" id="IPR046346">
    <property type="entry name" value="Aminoacid_DH-like_N_sf"/>
</dbReference>
<dbReference type="InterPro" id="IPR036291">
    <property type="entry name" value="NAD(P)-bd_dom_sf"/>
</dbReference>
<dbReference type="InterPro" id="IPR000672">
    <property type="entry name" value="THF_DH/CycHdrlase"/>
</dbReference>
<dbReference type="InterPro" id="IPR020630">
    <property type="entry name" value="THF_DH/CycHdrlase_cat_dom"/>
</dbReference>
<dbReference type="InterPro" id="IPR020631">
    <property type="entry name" value="THF_DH/CycHdrlase_NAD-bd_dom"/>
</dbReference>
<dbReference type="NCBIfam" id="NF010789">
    <property type="entry name" value="PRK14193.1"/>
    <property type="match status" value="1"/>
</dbReference>
<dbReference type="PANTHER" id="PTHR48099:SF5">
    <property type="entry name" value="C-1-TETRAHYDROFOLATE SYNTHASE, CYTOPLASMIC"/>
    <property type="match status" value="1"/>
</dbReference>
<dbReference type="PANTHER" id="PTHR48099">
    <property type="entry name" value="C-1-TETRAHYDROFOLATE SYNTHASE, CYTOPLASMIC-RELATED"/>
    <property type="match status" value="1"/>
</dbReference>
<dbReference type="Pfam" id="PF00763">
    <property type="entry name" value="THF_DHG_CYH"/>
    <property type="match status" value="1"/>
</dbReference>
<dbReference type="Pfam" id="PF02882">
    <property type="entry name" value="THF_DHG_CYH_C"/>
    <property type="match status" value="1"/>
</dbReference>
<dbReference type="PRINTS" id="PR00085">
    <property type="entry name" value="THFDHDRGNASE"/>
</dbReference>
<dbReference type="SUPFAM" id="SSF53223">
    <property type="entry name" value="Aminoacid dehydrogenase-like, N-terminal domain"/>
    <property type="match status" value="1"/>
</dbReference>
<dbReference type="SUPFAM" id="SSF51735">
    <property type="entry name" value="NAD(P)-binding Rossmann-fold domains"/>
    <property type="match status" value="1"/>
</dbReference>
<gene>
    <name evidence="1" type="primary">folD</name>
    <name type="ordered locus">Tfu_2571</name>
</gene>
<sequence length="283" mass="29350">MTAQVLDGKATAAAIREELKERVAALRARGVVPGLGTILVGDDPGSHAYVRGKHRDCAEVGIASIRKDLPADATQADVEAAVAELNADPACTGFIVQLPLPRGLDENRVLEKIDPAKDADGLHPSNLGKLVLMEEAPLPCTPRGIVELLNRYGVSLRGAEVVVVGRGVTVGRPLGLLLTRRSENATVTLCHTGTRDLAAHTRRADIVVAAAGVPGLITKDMVSPGAVVLDVGVTRTEKGLVGDVAPDVAEVAGYLSPNPGGVGPMTRAMLLTNVVEAAERSLS</sequence>
<accession>Q47LR8</accession>
<evidence type="ECO:0000255" key="1">
    <source>
        <dbReference type="HAMAP-Rule" id="MF_01576"/>
    </source>
</evidence>
<organism>
    <name type="scientific">Thermobifida fusca (strain YX)</name>
    <dbReference type="NCBI Taxonomy" id="269800"/>
    <lineage>
        <taxon>Bacteria</taxon>
        <taxon>Bacillati</taxon>
        <taxon>Actinomycetota</taxon>
        <taxon>Actinomycetes</taxon>
        <taxon>Streptosporangiales</taxon>
        <taxon>Nocardiopsidaceae</taxon>
        <taxon>Thermobifida</taxon>
    </lineage>
</organism>